<comment type="function">
    <text evidence="1">Aspartyl-tRNA synthetase with relaxed tRNA specificity since it is able to aspartylate not only its cognate tRNA(Asp) but also tRNA(Asn). Reaction proceeds in two steps: L-aspartate is first activated by ATP to form Asp-AMP and then transferred to the acceptor end of tRNA(Asp/Asn).</text>
</comment>
<comment type="catalytic activity">
    <reaction evidence="1">
        <text>tRNA(Asx) + L-aspartate + ATP = L-aspartyl-tRNA(Asx) + AMP + diphosphate</text>
        <dbReference type="Rhea" id="RHEA:18349"/>
        <dbReference type="Rhea" id="RHEA-COMP:9710"/>
        <dbReference type="Rhea" id="RHEA-COMP:9711"/>
        <dbReference type="ChEBI" id="CHEBI:29991"/>
        <dbReference type="ChEBI" id="CHEBI:30616"/>
        <dbReference type="ChEBI" id="CHEBI:33019"/>
        <dbReference type="ChEBI" id="CHEBI:78442"/>
        <dbReference type="ChEBI" id="CHEBI:78516"/>
        <dbReference type="ChEBI" id="CHEBI:456215"/>
        <dbReference type="EC" id="6.1.1.23"/>
    </reaction>
</comment>
<comment type="subunit">
    <text evidence="1">Homodimer.</text>
</comment>
<comment type="subcellular location">
    <subcellularLocation>
        <location evidence="1">Cytoplasm</location>
    </subcellularLocation>
</comment>
<comment type="similarity">
    <text evidence="1">Belongs to the class-II aminoacyl-tRNA synthetase family. Type 1 subfamily.</text>
</comment>
<reference key="1">
    <citation type="journal article" date="2007" name="Science">
        <title>Legumes symbioses: absence of nod genes in photosynthetic bradyrhizobia.</title>
        <authorList>
            <person name="Giraud E."/>
            <person name="Moulin L."/>
            <person name="Vallenet D."/>
            <person name="Barbe V."/>
            <person name="Cytryn E."/>
            <person name="Avarre J.-C."/>
            <person name="Jaubert M."/>
            <person name="Simon D."/>
            <person name="Cartieaux F."/>
            <person name="Prin Y."/>
            <person name="Bena G."/>
            <person name="Hannibal L."/>
            <person name="Fardoux J."/>
            <person name="Kojadinovic M."/>
            <person name="Vuillet L."/>
            <person name="Lajus A."/>
            <person name="Cruveiller S."/>
            <person name="Rouy Z."/>
            <person name="Mangenot S."/>
            <person name="Segurens B."/>
            <person name="Dossat C."/>
            <person name="Franck W.L."/>
            <person name="Chang W.-S."/>
            <person name="Saunders E."/>
            <person name="Bruce D."/>
            <person name="Richardson P."/>
            <person name="Normand P."/>
            <person name="Dreyfus B."/>
            <person name="Pignol D."/>
            <person name="Stacey G."/>
            <person name="Emerich D."/>
            <person name="Vermeglio A."/>
            <person name="Medigue C."/>
            <person name="Sadowsky M."/>
        </authorList>
    </citation>
    <scope>NUCLEOTIDE SEQUENCE [LARGE SCALE GENOMIC DNA]</scope>
    <source>
        <strain>BTAi1 / ATCC BAA-1182</strain>
    </source>
</reference>
<gene>
    <name evidence="1" type="primary">aspS</name>
    <name type="ordered locus">BBta_3864</name>
</gene>
<name>SYDND_BRASB</name>
<keyword id="KW-0030">Aminoacyl-tRNA synthetase</keyword>
<keyword id="KW-0067">ATP-binding</keyword>
<keyword id="KW-0963">Cytoplasm</keyword>
<keyword id="KW-0436">Ligase</keyword>
<keyword id="KW-0547">Nucleotide-binding</keyword>
<keyword id="KW-0648">Protein biosynthesis</keyword>
<keyword id="KW-1185">Reference proteome</keyword>
<accession>A5EIE6</accession>
<organism>
    <name type="scientific">Bradyrhizobium sp. (strain BTAi1 / ATCC BAA-1182)</name>
    <dbReference type="NCBI Taxonomy" id="288000"/>
    <lineage>
        <taxon>Bacteria</taxon>
        <taxon>Pseudomonadati</taxon>
        <taxon>Pseudomonadota</taxon>
        <taxon>Alphaproteobacteria</taxon>
        <taxon>Hyphomicrobiales</taxon>
        <taxon>Nitrobacteraceae</taxon>
        <taxon>Bradyrhizobium</taxon>
    </lineage>
</organism>
<proteinExistence type="inferred from homology"/>
<feature type="chain" id="PRO_1000006641" description="Aspartate--tRNA(Asp/Asn) ligase">
    <location>
        <begin position="1"/>
        <end position="590"/>
    </location>
</feature>
<feature type="region of interest" description="Aspartate" evidence="1">
    <location>
        <begin position="199"/>
        <end position="202"/>
    </location>
</feature>
<feature type="binding site" evidence="1">
    <location>
        <position position="175"/>
    </location>
    <ligand>
        <name>L-aspartate</name>
        <dbReference type="ChEBI" id="CHEBI:29991"/>
    </ligand>
</feature>
<feature type="binding site" evidence="1">
    <location>
        <begin position="221"/>
        <end position="223"/>
    </location>
    <ligand>
        <name>ATP</name>
        <dbReference type="ChEBI" id="CHEBI:30616"/>
    </ligand>
</feature>
<feature type="binding site" evidence="1">
    <location>
        <position position="221"/>
    </location>
    <ligand>
        <name>L-aspartate</name>
        <dbReference type="ChEBI" id="CHEBI:29991"/>
    </ligand>
</feature>
<feature type="binding site" evidence="1">
    <location>
        <position position="450"/>
    </location>
    <ligand>
        <name>L-aspartate</name>
        <dbReference type="ChEBI" id="CHEBI:29991"/>
    </ligand>
</feature>
<feature type="binding site" evidence="1">
    <location>
        <position position="484"/>
    </location>
    <ligand>
        <name>ATP</name>
        <dbReference type="ChEBI" id="CHEBI:30616"/>
    </ligand>
</feature>
<feature type="binding site" evidence="1">
    <location>
        <position position="491"/>
    </location>
    <ligand>
        <name>L-aspartate</name>
        <dbReference type="ChEBI" id="CHEBI:29991"/>
    </ligand>
</feature>
<feature type="binding site" evidence="1">
    <location>
        <begin position="536"/>
        <end position="539"/>
    </location>
    <ligand>
        <name>ATP</name>
        <dbReference type="ChEBI" id="CHEBI:30616"/>
    </ligand>
</feature>
<feature type="site" description="Important for tRNA non-discrimination" evidence="1">
    <location>
        <position position="33"/>
    </location>
</feature>
<feature type="site" description="Important for tRNA non-discrimination" evidence="1">
    <location>
        <position position="83"/>
    </location>
</feature>
<protein>
    <recommendedName>
        <fullName evidence="1">Aspartate--tRNA(Asp/Asn) ligase</fullName>
        <ecNumber evidence="1">6.1.1.23</ecNumber>
    </recommendedName>
    <alternativeName>
        <fullName evidence="1">Aspartyl-tRNA synthetase</fullName>
        <shortName evidence="1">AspRS</shortName>
    </alternativeName>
    <alternativeName>
        <fullName evidence="1">Non-discriminating aspartyl-tRNA synthetase</fullName>
        <shortName evidence="1">ND-AspRS</shortName>
    </alternativeName>
</protein>
<sequence length="590" mass="66606">MHRYRTHTCGALRDSNIGETVRLSGWCHRIRDHGGVLFVDLRDHYGITQCVVDPDSKAFGLAEKLRSEWVVRMEGKVRRRPEGTDNAELPTGQVELYVADIEVLGPAAELPLPVFGEQEYPEDIRLKYRFLDLRREKLHQNIMTRGAIIDSMRRRMKEQGFFEFQTPILTASSPEGARDFLVPSRIHPGKFYALPQAPQQYKQLLMMSGFDRYFQIAPCFRDEDPRADRLPGEFYQLDVEMSFVEQEDVFAAMEPVITGVFEDFAKGKPVTKGWPRIPFAEALRKYGTDKPDLRNPIEMQDVSEHFRGSGFKVFARMLEDTKNQVWAIPAPGGGSRAFCDRMNSWAQGEGQPGLGYIMWREGGEGAGPLANNIGPERTAAIRTQLGTKEGDAAFFVAGDPEKFWKFAGLARTKVGEELNLIDKDRFALAWIVDFPMYEYNEDDKKVDFSHNPFSMPQGGLEALQTKDPLTIKAFQYDIACNGYEIASGGIRNHKPEAMVKAFEIAGYGEQEVVDRFGGMYRAFQYGAPPHGGMAAGVDRIVMLLCGTTNLREISLFPMNQQAMDLLMGAPSEATTKQLRELHIRTNLPNK</sequence>
<dbReference type="EC" id="6.1.1.23" evidence="1"/>
<dbReference type="EMBL" id="CP000494">
    <property type="protein sequence ID" value="ABQ35940.1"/>
    <property type="molecule type" value="Genomic_DNA"/>
</dbReference>
<dbReference type="RefSeq" id="WP_012043944.1">
    <property type="nucleotide sequence ID" value="NC_009485.1"/>
</dbReference>
<dbReference type="SMR" id="A5EIE6"/>
<dbReference type="STRING" id="288000.BBta_3864"/>
<dbReference type="KEGG" id="bbt:BBta_3864"/>
<dbReference type="eggNOG" id="COG0173">
    <property type="taxonomic scope" value="Bacteria"/>
</dbReference>
<dbReference type="HOGENOM" id="CLU_014330_3_2_5"/>
<dbReference type="OrthoDB" id="9802326at2"/>
<dbReference type="Proteomes" id="UP000000246">
    <property type="component" value="Chromosome"/>
</dbReference>
<dbReference type="GO" id="GO:0005737">
    <property type="term" value="C:cytoplasm"/>
    <property type="evidence" value="ECO:0007669"/>
    <property type="project" value="UniProtKB-SubCell"/>
</dbReference>
<dbReference type="GO" id="GO:0004815">
    <property type="term" value="F:aspartate-tRNA ligase activity"/>
    <property type="evidence" value="ECO:0007669"/>
    <property type="project" value="UniProtKB-UniRule"/>
</dbReference>
<dbReference type="GO" id="GO:0050560">
    <property type="term" value="F:aspartate-tRNA(Asn) ligase activity"/>
    <property type="evidence" value="ECO:0007669"/>
    <property type="project" value="UniProtKB-EC"/>
</dbReference>
<dbReference type="GO" id="GO:0005524">
    <property type="term" value="F:ATP binding"/>
    <property type="evidence" value="ECO:0007669"/>
    <property type="project" value="UniProtKB-UniRule"/>
</dbReference>
<dbReference type="GO" id="GO:0003676">
    <property type="term" value="F:nucleic acid binding"/>
    <property type="evidence" value="ECO:0007669"/>
    <property type="project" value="InterPro"/>
</dbReference>
<dbReference type="GO" id="GO:0006422">
    <property type="term" value="P:aspartyl-tRNA aminoacylation"/>
    <property type="evidence" value="ECO:0007669"/>
    <property type="project" value="UniProtKB-UniRule"/>
</dbReference>
<dbReference type="CDD" id="cd00777">
    <property type="entry name" value="AspRS_core"/>
    <property type="match status" value="1"/>
</dbReference>
<dbReference type="CDD" id="cd04317">
    <property type="entry name" value="EcAspRS_like_N"/>
    <property type="match status" value="1"/>
</dbReference>
<dbReference type="Gene3D" id="3.30.930.10">
    <property type="entry name" value="Bira Bifunctional Protein, Domain 2"/>
    <property type="match status" value="1"/>
</dbReference>
<dbReference type="Gene3D" id="3.30.1360.30">
    <property type="entry name" value="GAD-like domain"/>
    <property type="match status" value="1"/>
</dbReference>
<dbReference type="Gene3D" id="2.40.50.140">
    <property type="entry name" value="Nucleic acid-binding proteins"/>
    <property type="match status" value="1"/>
</dbReference>
<dbReference type="HAMAP" id="MF_00044">
    <property type="entry name" value="Asp_tRNA_synth_type1"/>
    <property type="match status" value="1"/>
</dbReference>
<dbReference type="InterPro" id="IPR004364">
    <property type="entry name" value="Aa-tRNA-synt_II"/>
</dbReference>
<dbReference type="InterPro" id="IPR006195">
    <property type="entry name" value="aa-tRNA-synth_II"/>
</dbReference>
<dbReference type="InterPro" id="IPR045864">
    <property type="entry name" value="aa-tRNA-synth_II/BPL/LPL"/>
</dbReference>
<dbReference type="InterPro" id="IPR004524">
    <property type="entry name" value="Asp-tRNA-ligase_1"/>
</dbReference>
<dbReference type="InterPro" id="IPR047089">
    <property type="entry name" value="Asp-tRNA-ligase_1_N"/>
</dbReference>
<dbReference type="InterPro" id="IPR002312">
    <property type="entry name" value="Asp/Asn-tRNA-synth_IIb"/>
</dbReference>
<dbReference type="InterPro" id="IPR047090">
    <property type="entry name" value="AspRS_core"/>
</dbReference>
<dbReference type="InterPro" id="IPR004115">
    <property type="entry name" value="GAD-like_sf"/>
</dbReference>
<dbReference type="InterPro" id="IPR029351">
    <property type="entry name" value="GAD_dom"/>
</dbReference>
<dbReference type="InterPro" id="IPR012340">
    <property type="entry name" value="NA-bd_OB-fold"/>
</dbReference>
<dbReference type="InterPro" id="IPR004365">
    <property type="entry name" value="NA-bd_OB_tRNA"/>
</dbReference>
<dbReference type="NCBIfam" id="TIGR00459">
    <property type="entry name" value="aspS_bact"/>
    <property type="match status" value="1"/>
</dbReference>
<dbReference type="NCBIfam" id="NF001750">
    <property type="entry name" value="PRK00476.1"/>
    <property type="match status" value="1"/>
</dbReference>
<dbReference type="PANTHER" id="PTHR22594:SF5">
    <property type="entry name" value="ASPARTATE--TRNA LIGASE, MITOCHONDRIAL"/>
    <property type="match status" value="1"/>
</dbReference>
<dbReference type="PANTHER" id="PTHR22594">
    <property type="entry name" value="ASPARTYL/LYSYL-TRNA SYNTHETASE"/>
    <property type="match status" value="1"/>
</dbReference>
<dbReference type="Pfam" id="PF02938">
    <property type="entry name" value="GAD"/>
    <property type="match status" value="1"/>
</dbReference>
<dbReference type="Pfam" id="PF00152">
    <property type="entry name" value="tRNA-synt_2"/>
    <property type="match status" value="1"/>
</dbReference>
<dbReference type="Pfam" id="PF01336">
    <property type="entry name" value="tRNA_anti-codon"/>
    <property type="match status" value="1"/>
</dbReference>
<dbReference type="PRINTS" id="PR01042">
    <property type="entry name" value="TRNASYNTHASP"/>
</dbReference>
<dbReference type="SUPFAM" id="SSF55681">
    <property type="entry name" value="Class II aaRS and biotin synthetases"/>
    <property type="match status" value="1"/>
</dbReference>
<dbReference type="SUPFAM" id="SSF55261">
    <property type="entry name" value="GAD domain-like"/>
    <property type="match status" value="1"/>
</dbReference>
<dbReference type="SUPFAM" id="SSF50249">
    <property type="entry name" value="Nucleic acid-binding proteins"/>
    <property type="match status" value="1"/>
</dbReference>
<dbReference type="PROSITE" id="PS50862">
    <property type="entry name" value="AA_TRNA_LIGASE_II"/>
    <property type="match status" value="1"/>
</dbReference>
<evidence type="ECO:0000255" key="1">
    <source>
        <dbReference type="HAMAP-Rule" id="MF_00044"/>
    </source>
</evidence>